<comment type="cofactor">
    <cofactor evidence="1">
        <name>Zn(2+)</name>
        <dbReference type="ChEBI" id="CHEBI:29105"/>
    </cofactor>
    <text evidence="1">Binds 1 zinc ion.</text>
</comment>
<comment type="subcellular location">
    <subcellularLocation>
        <location evidence="1">Cytoplasm</location>
    </subcellularLocation>
</comment>
<comment type="similarity">
    <text evidence="1">Belongs to the SprT family.</text>
</comment>
<name>SPRTL_STAAM</name>
<accession>P67726</accession>
<accession>Q99SJ0</accession>
<evidence type="ECO:0000255" key="1">
    <source>
        <dbReference type="HAMAP-Rule" id="MF_00745"/>
    </source>
</evidence>
<organism>
    <name type="scientific">Staphylococcus aureus (strain Mu50 / ATCC 700699)</name>
    <dbReference type="NCBI Taxonomy" id="158878"/>
    <lineage>
        <taxon>Bacteria</taxon>
        <taxon>Bacillati</taxon>
        <taxon>Bacillota</taxon>
        <taxon>Bacilli</taxon>
        <taxon>Bacillales</taxon>
        <taxon>Staphylococcaceae</taxon>
        <taxon>Staphylococcus</taxon>
    </lineage>
</organism>
<feature type="chain" id="PRO_0000213297" description="Protein SprT-like">
    <location>
        <begin position="1"/>
        <end position="151"/>
    </location>
</feature>
<feature type="domain" description="SprT-like" evidence="1">
    <location>
        <begin position="6"/>
        <end position="147"/>
    </location>
</feature>
<feature type="active site" evidence="1">
    <location>
        <position position="68"/>
    </location>
</feature>
<feature type="binding site" evidence="1">
    <location>
        <position position="67"/>
    </location>
    <ligand>
        <name>Zn(2+)</name>
        <dbReference type="ChEBI" id="CHEBI:29105"/>
    </ligand>
</feature>
<feature type="binding site" evidence="1">
    <location>
        <position position="71"/>
    </location>
    <ligand>
        <name>Zn(2+)</name>
        <dbReference type="ChEBI" id="CHEBI:29105"/>
    </ligand>
</feature>
<proteinExistence type="inferred from homology"/>
<sequence>MNNDKLQRMVENLSEEKFGRTFRHCAYFNKRLRTTGGRYLLKSHDIEINPKQYEHYGEDAVVKIILHELCHYHLHIAGKGYQHKDQDFKRLSQQVGAPRFCNSIESYQQRANYEYYCTKCHAKYIRIRKVDTNRMRCGHCNGKLRMKRQLK</sequence>
<reference key="1">
    <citation type="journal article" date="2001" name="Lancet">
        <title>Whole genome sequencing of meticillin-resistant Staphylococcus aureus.</title>
        <authorList>
            <person name="Kuroda M."/>
            <person name="Ohta T."/>
            <person name="Uchiyama I."/>
            <person name="Baba T."/>
            <person name="Yuzawa H."/>
            <person name="Kobayashi I."/>
            <person name="Cui L."/>
            <person name="Oguchi A."/>
            <person name="Aoki K."/>
            <person name="Nagai Y."/>
            <person name="Lian J.-Q."/>
            <person name="Ito T."/>
            <person name="Kanamori M."/>
            <person name="Matsumaru H."/>
            <person name="Maruyama A."/>
            <person name="Murakami H."/>
            <person name="Hosoyama A."/>
            <person name="Mizutani-Ui Y."/>
            <person name="Takahashi N.K."/>
            <person name="Sawano T."/>
            <person name="Inoue R."/>
            <person name="Kaito C."/>
            <person name="Sekimizu K."/>
            <person name="Hirakawa H."/>
            <person name="Kuhara S."/>
            <person name="Goto S."/>
            <person name="Yabuzaki J."/>
            <person name="Kanehisa M."/>
            <person name="Yamashita A."/>
            <person name="Oshima K."/>
            <person name="Furuya K."/>
            <person name="Yoshino C."/>
            <person name="Shiba T."/>
            <person name="Hattori M."/>
            <person name="Ogasawara N."/>
            <person name="Hayashi H."/>
            <person name="Hiramatsu K."/>
        </authorList>
    </citation>
    <scope>NUCLEOTIDE SEQUENCE [LARGE SCALE GENOMIC DNA]</scope>
    <source>
        <strain>Mu50 / ATCC 700699</strain>
    </source>
</reference>
<gene>
    <name type="ordered locus">SAV2062</name>
</gene>
<protein>
    <recommendedName>
        <fullName evidence="1">Protein SprT-like</fullName>
    </recommendedName>
</protein>
<keyword id="KW-0963">Cytoplasm</keyword>
<keyword id="KW-0479">Metal-binding</keyword>
<keyword id="KW-0862">Zinc</keyword>
<dbReference type="EMBL" id="BA000017">
    <property type="protein sequence ID" value="BAB58224.1"/>
    <property type="molecule type" value="Genomic_DNA"/>
</dbReference>
<dbReference type="RefSeq" id="WP_001058111.1">
    <property type="nucleotide sequence ID" value="NC_002758.2"/>
</dbReference>
<dbReference type="KEGG" id="sav:SAV2062"/>
<dbReference type="HOGENOM" id="CLU_123820_0_0_9"/>
<dbReference type="PhylomeDB" id="P67726"/>
<dbReference type="Proteomes" id="UP000002481">
    <property type="component" value="Chromosome"/>
</dbReference>
<dbReference type="GO" id="GO:0005737">
    <property type="term" value="C:cytoplasm"/>
    <property type="evidence" value="ECO:0007669"/>
    <property type="project" value="UniProtKB-SubCell"/>
</dbReference>
<dbReference type="GO" id="GO:0008270">
    <property type="term" value="F:zinc ion binding"/>
    <property type="evidence" value="ECO:0007669"/>
    <property type="project" value="UniProtKB-UniRule"/>
</dbReference>
<dbReference type="GO" id="GO:0006950">
    <property type="term" value="P:response to stress"/>
    <property type="evidence" value="ECO:0007669"/>
    <property type="project" value="UniProtKB-ARBA"/>
</dbReference>
<dbReference type="HAMAP" id="MF_00745">
    <property type="entry name" value="SprT_like"/>
    <property type="match status" value="1"/>
</dbReference>
<dbReference type="InterPro" id="IPR006640">
    <property type="entry name" value="SprT-like_domain"/>
</dbReference>
<dbReference type="InterPro" id="IPR035240">
    <property type="entry name" value="SprT_Zn_ribbon"/>
</dbReference>
<dbReference type="InterPro" id="IPR023524">
    <property type="entry name" value="Uncharacterised_SprT-like"/>
</dbReference>
<dbReference type="NCBIfam" id="NF003339">
    <property type="entry name" value="PRK04351.1"/>
    <property type="match status" value="1"/>
</dbReference>
<dbReference type="Pfam" id="PF10263">
    <property type="entry name" value="SprT-like"/>
    <property type="match status" value="1"/>
</dbReference>
<dbReference type="Pfam" id="PF17283">
    <property type="entry name" value="Zn_ribbon_SprT"/>
    <property type="match status" value="1"/>
</dbReference>
<dbReference type="SMART" id="SM00731">
    <property type="entry name" value="SprT"/>
    <property type="match status" value="1"/>
</dbReference>